<feature type="signal peptide" evidence="2">
    <location>
        <begin position="1"/>
        <end position="35"/>
    </location>
</feature>
<feature type="chain" id="PRO_0000419791" description="Transmembrane emp24 domain-containing protein p24delta11">
    <location>
        <begin position="36"/>
        <end position="225"/>
    </location>
</feature>
<feature type="topological domain" description="Lumenal" evidence="2">
    <location>
        <begin position="36"/>
        <end position="193"/>
    </location>
</feature>
<feature type="transmembrane region" description="Helical" evidence="2">
    <location>
        <begin position="194"/>
        <end position="210"/>
    </location>
</feature>
<feature type="topological domain" description="Cytoplasmic" evidence="2">
    <location>
        <begin position="211"/>
        <end position="225"/>
    </location>
</feature>
<feature type="domain" description="GOLD" evidence="3">
    <location>
        <begin position="45"/>
        <end position="160"/>
    </location>
</feature>
<feature type="coiled-coil region" evidence="2">
    <location>
        <begin position="175"/>
        <end position="188"/>
    </location>
</feature>
<feature type="short sequence motif" description="COPI vesicle coat-binding" evidence="1">
    <location>
        <begin position="218"/>
        <end position="225"/>
    </location>
</feature>
<feature type="short sequence motif" description="COPII vesicle coat-binding" evidence="1">
    <location>
        <begin position="218"/>
        <end position="219"/>
    </location>
</feature>
<feature type="modified residue" description="Omega-N-methylated arginine" evidence="1">
    <location>
        <position position="178"/>
    </location>
</feature>
<feature type="glycosylation site" description="N-linked (GlcNAc...) asparagine" evidence="2">
    <location>
        <position position="186"/>
    </location>
</feature>
<protein>
    <recommendedName>
        <fullName>Transmembrane emp24 domain-containing protein p24delta11</fullName>
    </recommendedName>
    <alternativeName>
        <fullName>p24 family protein delta11</fullName>
        <shortName>p24delta11</shortName>
    </alternativeName>
    <alternativeName>
        <fullName>p24 family protein delta2e</fullName>
        <shortName>p24delta2e</shortName>
    </alternativeName>
</protein>
<organism>
    <name type="scientific">Arabidopsis thaliana</name>
    <name type="common">Mouse-ear cress</name>
    <dbReference type="NCBI Taxonomy" id="3702"/>
    <lineage>
        <taxon>Eukaryota</taxon>
        <taxon>Viridiplantae</taxon>
        <taxon>Streptophyta</taxon>
        <taxon>Embryophyta</taxon>
        <taxon>Tracheophyta</taxon>
        <taxon>Spermatophyta</taxon>
        <taxon>Magnoliopsida</taxon>
        <taxon>eudicotyledons</taxon>
        <taxon>Gunneridae</taxon>
        <taxon>Pentapetalae</taxon>
        <taxon>rosids</taxon>
        <taxon>malvids</taxon>
        <taxon>Brassicales</taxon>
        <taxon>Brassicaceae</taxon>
        <taxon>Camelineae</taxon>
        <taxon>Arabidopsis</taxon>
    </lineage>
</organism>
<keyword id="KW-0175">Coiled coil</keyword>
<keyword id="KW-0256">Endoplasmic reticulum</keyword>
<keyword id="KW-0931">ER-Golgi transport</keyword>
<keyword id="KW-0325">Glycoprotein</keyword>
<keyword id="KW-0333">Golgi apparatus</keyword>
<keyword id="KW-0472">Membrane</keyword>
<keyword id="KW-0488">Methylation</keyword>
<keyword id="KW-0653">Protein transport</keyword>
<keyword id="KW-1185">Reference proteome</keyword>
<keyword id="KW-0732">Signal</keyword>
<keyword id="KW-0812">Transmembrane</keyword>
<keyword id="KW-1133">Transmembrane helix</keyword>
<keyword id="KW-0813">Transport</keyword>
<name>P24DB_ARATH</name>
<comment type="function">
    <text evidence="1">Involved in vesicular protein trafficking. Mainly functions in the early secretory pathway. Thought to act as cargo receptor at the lumenal side for incorporation of secretory cargo molecules into transport vesicles and to be involved in vesicle coat formation at the cytoplasmic side (By similarity).</text>
</comment>
<comment type="subunit">
    <text evidence="1">Probably oligomerizes with other members of the EMP24/GP25L family. Associates with the COPI vesicle coat (coatomer). Associates with the COPII vesicle coat (coatomer).</text>
</comment>
<comment type="subcellular location">
    <subcellularLocation>
        <location evidence="4">Endoplasmic reticulum membrane</location>
        <topology evidence="4">Single-pass type I membrane protein</topology>
    </subcellularLocation>
    <subcellularLocation>
        <location evidence="4">Golgi apparatus</location>
        <location evidence="4">cis-Golgi network membrane</location>
        <topology evidence="4">Single-pass type I membrane protein</topology>
    </subcellularLocation>
    <subcellularLocation>
        <location evidence="4">Golgi apparatus</location>
        <location evidence="4">Golgi stack membrane</location>
        <topology evidence="4">Single-pass type I membrane protein</topology>
    </subcellularLocation>
    <text evidence="1">Cycles between the endoplasmic reticulum and Golgi via COPI and COPII dependent pathways.</text>
</comment>
<comment type="domain">
    <text evidence="1">The cytoplasmic C-terminal domain contains a functional dilysine-retrieval motif, which is involved in the retrograde Golgi-to-ER transport of the protein.</text>
</comment>
<comment type="similarity">
    <text evidence="5">Belongs to the EMP24/GP25L family.</text>
</comment>
<evidence type="ECO:0000250" key="1"/>
<evidence type="ECO:0000255" key="2"/>
<evidence type="ECO:0000255" key="3">
    <source>
        <dbReference type="PROSITE-ProRule" id="PRU00096"/>
    </source>
</evidence>
<evidence type="ECO:0000269" key="4">
    <source>
    </source>
</evidence>
<evidence type="ECO:0000305" key="5"/>
<sequence>MDLLPSRYKIHKTKLRWILTMMTMMMMMVMRRGESMRLDMESGNTKCISDDIKTNYMTVGTYSIVNPNEGHHLPPSHKLFVTVSSPKGKSHHHAENVESGKFVFTAEETGDYMTCFVAPGYRPTAKFAVDFEWKSGVEAKDWTTIAKRGQITMLEVEVRKLLDVTETIHEEMFQLIEREREMQELNRSTNSRMAALSLLSFVVTMSVAGLQLRHLKSFLERKKLL</sequence>
<dbReference type="EMBL" id="AP000388">
    <property type="protein sequence ID" value="BAB02949.1"/>
    <property type="molecule type" value="Genomic_DNA"/>
</dbReference>
<dbReference type="EMBL" id="CP002686">
    <property type="protein sequence ID" value="AEE77531.1"/>
    <property type="molecule type" value="Genomic_DNA"/>
</dbReference>
<dbReference type="RefSeq" id="NP_189550.2">
    <property type="nucleotide sequence ID" value="NM_113829.3"/>
</dbReference>
<dbReference type="SMR" id="Q9LJV9"/>
<dbReference type="BioGRID" id="7880">
    <property type="interactions" value="1"/>
</dbReference>
<dbReference type="FunCoup" id="Q9LJV9">
    <property type="interactions" value="2180"/>
</dbReference>
<dbReference type="STRING" id="3702.Q9LJV9"/>
<dbReference type="GlyGen" id="Q9LJV9">
    <property type="glycosylation" value="1 site"/>
</dbReference>
<dbReference type="PaxDb" id="3702-AT3G29070.1"/>
<dbReference type="ProteomicsDB" id="248787"/>
<dbReference type="EnsemblPlants" id="AT3G29070.1">
    <property type="protein sequence ID" value="AT3G29070.1"/>
    <property type="gene ID" value="AT3G29070"/>
</dbReference>
<dbReference type="GeneID" id="822551"/>
<dbReference type="Gramene" id="AT3G29070.1">
    <property type="protein sequence ID" value="AT3G29070.1"/>
    <property type="gene ID" value="AT3G29070"/>
</dbReference>
<dbReference type="KEGG" id="ath:AT3G29070"/>
<dbReference type="Araport" id="AT3G29070"/>
<dbReference type="TAIR" id="AT3G29070"/>
<dbReference type="eggNOG" id="KOG1691">
    <property type="taxonomic scope" value="Eukaryota"/>
</dbReference>
<dbReference type="HOGENOM" id="CLU_066963_3_2_1"/>
<dbReference type="InParanoid" id="Q9LJV9"/>
<dbReference type="OMA" id="MTCFVAP"/>
<dbReference type="PhylomeDB" id="Q9LJV9"/>
<dbReference type="PRO" id="PR:Q9LJV9"/>
<dbReference type="Proteomes" id="UP000006548">
    <property type="component" value="Chromosome 3"/>
</dbReference>
<dbReference type="ExpressionAtlas" id="Q9LJV9">
    <property type="expression patterns" value="baseline and differential"/>
</dbReference>
<dbReference type="GO" id="GO:0005789">
    <property type="term" value="C:endoplasmic reticulum membrane"/>
    <property type="evidence" value="ECO:0007669"/>
    <property type="project" value="UniProtKB-SubCell"/>
</dbReference>
<dbReference type="GO" id="GO:0032580">
    <property type="term" value="C:Golgi cisterna membrane"/>
    <property type="evidence" value="ECO:0007669"/>
    <property type="project" value="UniProtKB-SubCell"/>
</dbReference>
<dbReference type="GO" id="GO:0015031">
    <property type="term" value="P:protein transport"/>
    <property type="evidence" value="ECO:0007669"/>
    <property type="project" value="UniProtKB-KW"/>
</dbReference>
<dbReference type="GO" id="GO:0016192">
    <property type="term" value="P:vesicle-mediated transport"/>
    <property type="evidence" value="ECO:0007669"/>
    <property type="project" value="UniProtKB-KW"/>
</dbReference>
<dbReference type="InterPro" id="IPR015720">
    <property type="entry name" value="Emp24-like"/>
</dbReference>
<dbReference type="InterPro" id="IPR009038">
    <property type="entry name" value="GOLD_dom"/>
</dbReference>
<dbReference type="PANTHER" id="PTHR22811">
    <property type="entry name" value="TRANSMEMBRANE EMP24 DOMAIN-CONTAINING PROTEIN"/>
    <property type="match status" value="1"/>
</dbReference>
<dbReference type="Pfam" id="PF01105">
    <property type="entry name" value="EMP24_GP25L"/>
    <property type="match status" value="1"/>
</dbReference>
<dbReference type="SMART" id="SM01190">
    <property type="entry name" value="EMP24_GP25L"/>
    <property type="match status" value="1"/>
</dbReference>
<dbReference type="PROSITE" id="PS50866">
    <property type="entry name" value="GOLD"/>
    <property type="match status" value="1"/>
</dbReference>
<reference key="1">
    <citation type="journal article" date="2000" name="DNA Res.">
        <title>Structural analysis of Arabidopsis thaliana chromosome 3. II. Sequence features of the 4,251,695 bp regions covered by 90 P1, TAC and BAC clones.</title>
        <authorList>
            <person name="Kaneko T."/>
            <person name="Katoh T."/>
            <person name="Sato S."/>
            <person name="Nakamura Y."/>
            <person name="Asamizu E."/>
            <person name="Tabata S."/>
        </authorList>
    </citation>
    <scope>NUCLEOTIDE SEQUENCE [LARGE SCALE GENOMIC DNA]</scope>
    <source>
        <strain>cv. Columbia</strain>
    </source>
</reference>
<reference key="2">
    <citation type="journal article" date="2017" name="Plant J.">
        <title>Araport11: a complete reannotation of the Arabidopsis thaliana reference genome.</title>
        <authorList>
            <person name="Cheng C.Y."/>
            <person name="Krishnakumar V."/>
            <person name="Chan A.P."/>
            <person name="Thibaud-Nissen F."/>
            <person name="Schobel S."/>
            <person name="Town C.D."/>
        </authorList>
    </citation>
    <scope>GENOME REANNOTATION</scope>
    <source>
        <strain>cv. Columbia</strain>
    </source>
</reference>
<reference key="3">
    <citation type="journal article" date="2012" name="J. Exp. Bot.">
        <title>Coupled transport of Arabidopsis p24 proteins at the ER-Golgi interface.</title>
        <authorList>
            <person name="Montesinos J.C."/>
            <person name="Sturm S."/>
            <person name="Langhans M."/>
            <person name="Hillmer S."/>
            <person name="Marcote M.J."/>
            <person name="Robinson D.G."/>
            <person name="Aniento F."/>
        </authorList>
    </citation>
    <scope>GENE FAMILY</scope>
    <scope>NOMENCLATURE</scope>
</reference>
<reference key="4">
    <citation type="journal article" date="2012" name="Traffic">
        <title>Subclass-specific localization and trafficking of Arabidopsis p24 proteins in the ER-Golgi interface.</title>
        <authorList>
            <person name="Chen J."/>
            <person name="Qi X."/>
            <person name="Zheng H."/>
        </authorList>
    </citation>
    <scope>GENE FAMILY</scope>
    <scope>SUBCELLULAR LOCATION</scope>
    <scope>COILED-COIL DOMAIN</scope>
</reference>
<proteinExistence type="evidence at transcript level"/>
<accession>Q9LJV9</accession>
<gene>
    <name type="ordered locus">At3g29070</name>
    <name type="ORF">MRI12.5</name>
</gene>